<proteinExistence type="evidence at protein level"/>
<dbReference type="EMBL" id="CP000725">
    <property type="protein sequence ID" value="ABV10352.1"/>
    <property type="molecule type" value="Genomic_DNA"/>
</dbReference>
<dbReference type="RefSeq" id="WP_012130981.1">
    <property type="nucleotide sequence ID" value="NC_009785.1"/>
</dbReference>
<dbReference type="SMR" id="A8AZP4"/>
<dbReference type="STRING" id="467705.SGO_2005"/>
<dbReference type="KEGG" id="sgo:SGO_2005"/>
<dbReference type="eggNOG" id="COG2304">
    <property type="taxonomic scope" value="Bacteria"/>
</dbReference>
<dbReference type="eggNOG" id="COG4932">
    <property type="taxonomic scope" value="Bacteria"/>
</dbReference>
<dbReference type="HOGENOM" id="CLU_000386_0_0_9"/>
<dbReference type="Proteomes" id="UP000001131">
    <property type="component" value="Chromosome"/>
</dbReference>
<dbReference type="GO" id="GO:0005576">
    <property type="term" value="C:extracellular region"/>
    <property type="evidence" value="ECO:0007669"/>
    <property type="project" value="UniProtKB-KW"/>
</dbReference>
<dbReference type="GO" id="GO:0098785">
    <property type="term" value="P:biofilm matrix assembly"/>
    <property type="evidence" value="ECO:0000315"/>
    <property type="project" value="UniProtKB"/>
</dbReference>
<dbReference type="GO" id="GO:0007155">
    <property type="term" value="P:cell adhesion"/>
    <property type="evidence" value="ECO:0007669"/>
    <property type="project" value="UniProtKB-KW"/>
</dbReference>
<dbReference type="GO" id="GO:0090604">
    <property type="term" value="P:surface biofilm formation"/>
    <property type="evidence" value="ECO:0000315"/>
    <property type="project" value="UniProtKB"/>
</dbReference>
<dbReference type="Gene3D" id="2.60.40.740">
    <property type="match status" value="18"/>
</dbReference>
<dbReference type="Gene3D" id="3.40.50.410">
    <property type="entry name" value="von Willebrand factor, type A domain"/>
    <property type="match status" value="1"/>
</dbReference>
<dbReference type="InterPro" id="IPR026466">
    <property type="entry name" value="Fim_isopep_form_D2_dom"/>
</dbReference>
<dbReference type="InterPro" id="IPR019931">
    <property type="entry name" value="LPXTG_anchor"/>
</dbReference>
<dbReference type="InterPro" id="IPR002035">
    <property type="entry name" value="VWF_A"/>
</dbReference>
<dbReference type="InterPro" id="IPR036465">
    <property type="entry name" value="vWFA_dom_sf"/>
</dbReference>
<dbReference type="NCBIfam" id="TIGR01167">
    <property type="entry name" value="LPXTG_anchor"/>
    <property type="match status" value="1"/>
</dbReference>
<dbReference type="NCBIfam" id="TIGR04226">
    <property type="entry name" value="RrgB_K2N_iso_D2"/>
    <property type="match status" value="17"/>
</dbReference>
<dbReference type="PANTHER" id="PTHR24216:SF65">
    <property type="entry name" value="PAXILLIN-LIKE PROTEIN 1"/>
    <property type="match status" value="1"/>
</dbReference>
<dbReference type="PANTHER" id="PTHR24216">
    <property type="entry name" value="PAXILLIN-RELATED"/>
    <property type="match status" value="1"/>
</dbReference>
<dbReference type="SUPFAM" id="SSF53300">
    <property type="entry name" value="vWA-like"/>
    <property type="match status" value="1"/>
</dbReference>
<dbReference type="PROSITE" id="PS50847">
    <property type="entry name" value="GRAM_POS_ANCHORING"/>
    <property type="match status" value="1"/>
</dbReference>
<dbReference type="PROSITE" id="PS50234">
    <property type="entry name" value="VWFA"/>
    <property type="match status" value="1"/>
</dbReference>
<accession>A8AZP4</accession>
<sequence length="3646" mass="397342">MKDFLKKVLILFTVLLMSMPSSVLNLGTSVVRADDPLNIETRRIDEHTTITQNGCYRKIEKTDATDWTVPRKPIDLVILQDASGSFRTTIPSVKNALKRLTTYVSPEQYDENDPHLVKTDDPRTTDRVFVASYQGLDQVRYFENNDFSGNPANVYTDANSTGKNYTYGNSGLTSDQNKVHNFIDNIAVDGGTPTVPAIDDTIAQYNRVKGNMENGRKTVFLLVTDGVANGYRLPGTNTVVMDKSWTRTDAIQKAWRVDSYPEAAQDIIGRANELKAAGNQLKAAVGSEGSVVVGFWERVDNFTEKYYQYGPAYLNGFGNTINIGDNRSVQAIFHDALQSMASPDKVVNGKNVSFYVNEQNNIDVFSQKILESVAAALVKDDITGEFDITEGYKVDAIRINGKKIVPKVTDPSKEIRGTITQTGNKVKISVPDSVFNPGKNSFDYDLSKEARAPETDEDSEVDPPENYVPEKEEITVPELTGKFKAGDFETRQIGGRNQTVEVQKLEYCYPSATKTVKDADASNDIGVIPDPLELTKKPSYSAQLSKKDEEFTYTVDYNFNNVPYEFEKNVMLTDPIDYRLEVVSHSAQGPDGQSWPTRVVTQQDAGGNSQSVVVADVPPQGKDYNYLIMKKAKLKMTVRLKEEYRKNQASKAYLAILQNNNGYGLVNQGNIMWNGEDDSPNQDAHAKTKDKASTIRRSNPIYVKPPLDTEVDKKVNEKEHEGLQADGEEFEYKVTAPWPGIADKFTLTDTVVDELEIVPNSAKVTVAGKSYNALTKAISINGQTIDITLDKAQLTSLNRLISRRGGSEVQEIELIFKAKIRPGADLSKYKKNGAVNIPNTADVILNDKKKTSKEVTVTPPKPKEPTVSKKINNTLDSLVTFDGQPYTYNITTAVPSDVAGYKKFVISDKLDADLEFDGQASISGPLADVFEIQTNGQTVTATVKEGKFKELAKYSFVELTIPAKVKAGVTGKTIENKAKISFTNENNVAKEVESNPVTVTPPPVTKKINENLDHLDIATGQPYKYNVKTTLPSDITSYKEFVITDTLEDELSVINEGTDKPVISGPAAEFFDVTVSGQKVTATMKNFAGASALAGQEIELVIPAKINDGVTRSNIPNKATFSFKDKNDHKGEKETIPVTVTPPTEPNVSKKINGDQDNATIAAETDFTYNIKTTLPNDIDTYKSFAITDTLDENLGVVNPEPSISEEAKKFFDITVSGNTVTATMKDFAKASALANKEIELVIHAKVKKESVLPEIPNTAKITYTNKNNESKEKETEPVKVTPPPITKKVNGKDQEDLASLTSTFKYTVDSKVPIVADKFVLSDTLEEVLTFDGDATVTIDGQTVTDVTVAKKDQKLTVTFDKDQVKKYAGKAVQVAFDAKIKSGYTVDQLVAKYPNGDKAAIPNKASFVVNDNPETEKFSNPVTVTPPPPNTPEIEKKVNGADSYNLQTRLEEFTYSLNTAMPTNATEFTVTDELKSVLEFAGKKGDVQVKIDGKAANDQATISTDKNTLTVAFAEKAVKANAGKSIEVTFKAKIREGANLLDYLVPGQGIRIPNKASYDIDHNPKFHKDSNEVPVTPPSPEQPPIEKDVNDKAEATLEARDEEFTYHVKTKIPYEATAFNITDTLKEVLDFSGEKGQAEATVDGKKLSDDHIAINGQTITVTLNQEELKANADKEIKLTFKAKIRPNANLAAYVVGDKVVINNQASYNVDLPDNPGVHKDSNIVPVTPPSPEKPEIEKTVNDAKEATLANRDEIFTYKVKTKVPFDATAFSIDDTIKDVLEFADAGSATLNGEALEADRISIADQKITLTLTEDQVKNNGGKEVVLTFKAKIRQGANLSGYIEKGKTVINNQASYNAAFPNDPNFHKDSNIVPVTPPNPENPPIEKKVNEAESANLGARDEEFTYTIDTTVPLDVTGFAVYDTIEKVLEFSGENGQASATVDGQPLDASHITIKGQKITVKLTEDEAKALGGKAVHVSFKAKIKAGANLSDYIEKDGTTRIYNTAKYNFNNDPGTEQSSKPVPVIPPTPTEPELKKEVNGKEAETLANRDDVFTYTVKTTVPQDATAFSISDSLVPVLEFAGEDAEASLTLNGEKLDAKQIKLKDQTISAELTEAQVKANGGKEVVLNFKAKIREGANLADYIEADGVTRVPNKASYVANFPHRPKVEKDSNIVPVTPPSPENPPVEKKVNNKPSATLDSRDEEFTYTIDTKVPVDATGFKITDELKDVLEFSGKKGQAEVTVDGDKDVIEDSQITVDKQVLTVTLTKDQVKKYGNKAVHVSFKAKIRKNVSLAGYIEADGVTRIPNIAKYIINDDPKTEKSTEPVPVIPPSPEEPGIKKEVNGQPEATLKERYEEFTYKVTTSVPQDATAFSVSDTLVPVLEFSGEKGQATATLDGQEIDANRINVADQTISMALTEDEVKANGGKEVTLTFKAKIREGANLSAYIEKGKTSIPNTASYTAGFPNRPEIHKDSNRVPVTPPTPEEPEIKKDVNGKEEETLANRNDEFTYHINTKVPFDATAFSINDELKDVLEFADGTGRATASLNGQALDADRISINGQTITVNLTEEQVKNNGGKDVNLTFTAKIRQGVNLSGYIKDGKTSIPNKASYRVDFPNNPGVTKDSNEVPVTPPSPENPPIEKKVNEAESANLGARDEEFTYTIDTTVPLDVTGFAVYDTIEKVLEFSGENGQASATVDGQPLDASHITIKGQKITVKLTEDEAKALGGKAVHVSFKAKIKAGANLSDYIEKDGTTRIYNTAKYNFNNDPGTEQSSKPVPVIPPTPTEPELKKEVNGKEAETLANRDDVFTYTVKTTVPQDATAFSISDKLEDVLEFAGESSATLAGEDLKADQITTDGQIIKLTLTEDQVKANGGKEVVLNFKAKIREGANLSAYMKADKAEVPNKASYTVGFPNKPAVTKDSNEVPVTPPSPEQPPIEKDVNSKPSETIADRTEEFTYNIHTTMPQDATGFTVTDELKDVLEFAGDVQVTLGGKKADAAVAKNGQTLEVTFPEETVKANGGKKVQVTFKAKIKADADLTPYETANSYSVPNTASYLINNNPTSKKETKPVTVEVPKQPGPEVTKKINRTLDHLDVDRDVPYMYNVNTQIPKDIRLYKEFTVTDTLEPVLEITGTPVAYVDGYATDAVETKVEGNTVTVTVKDFARISGYKEIQLYIPAKLKADSDLSAYENQTVPNKATIAFKDSNGKNGTKESNPVTVRPRDPEKPEEPKPNEPAKTVGPADGSNPSTAYRLKELKEGFRFDVTAKVPTDPVDESGNPIKDAQGRDVKTELNSFTVTDELEKVLKVDRVAVKVEENKVAEAIAKITAKIEKAESDLKELEGKETNGTFAKKLAEAEKKVEELTAQLAAAKEKAAAAPATPAPASDSDAGNATATPAPADNNAEVAALEESLKAAQAELEQLKADGAKAGNLATPEEQKVEQDKLNKNLEQLKESKEKLEKALEAFTTVNDKGEITDEALAKIAKVTVEGQKVTVEVTDKAVLEALKGSTFRVIIYSSIKDGADLSSYLNKENNETKIPNKATVTFNDKPKVTNTVNVYPPEPTTPPQTPPHTPPTTPGTPPPTTPDTPPAPKGDLPPAPTPEPEKPKNILPKTGTSATMVNEVIIGMILVLMGLLLRRKPKH</sequence>
<gene>
    <name evidence="10" type="primary">padA</name>
    <name type="ordered locus">SGO_2005</name>
</gene>
<feature type="signal peptide" evidence="1">
    <location>
        <begin position="1"/>
        <end position="33"/>
    </location>
</feature>
<feature type="chain" id="PRO_5002719352" description="Platelet adherence protein A" evidence="1">
    <location>
        <begin position="34"/>
        <end position="3646"/>
    </location>
</feature>
<feature type="propeptide" id="PRO_5018372630" description="Removed by sortase" evidence="3">
    <location>
        <begin position="3618"/>
        <end position="3646"/>
    </location>
</feature>
<feature type="domain" description="VWFA" evidence="2">
    <location>
        <begin position="75"/>
        <end position="373"/>
    </location>
</feature>
<feature type="region of interest" description="Binds platelets" evidence="5">
    <location>
        <begin position="34"/>
        <end position="1328"/>
    </location>
</feature>
<feature type="region of interest" description="F2, binds platelets, fibronectin, vitronectin, salivary pellicle, causes ADP secretion by dense granules" evidence="5 7 8">
    <location>
        <begin position="34"/>
        <end position="690"/>
    </location>
</feature>
<feature type="region of interest" description="Does not bind platelets" evidence="5">
    <location>
        <begin position="34"/>
        <end position="359"/>
    </location>
</feature>
<feature type="region of interest" description="Disordered" evidence="4">
    <location>
        <begin position="439"/>
        <end position="466"/>
    </location>
</feature>
<feature type="region of interest" description="Central region with RrgB repeats" evidence="1">
    <location>
        <begin position="709"/>
        <end position="3205"/>
    </location>
</feature>
<feature type="region of interest" description="Disordered" evidence="4">
    <location>
        <begin position="1124"/>
        <end position="1153"/>
    </location>
</feature>
<feature type="region of interest" description="Disordered" evidence="4">
    <location>
        <begin position="1563"/>
        <end position="1589"/>
    </location>
</feature>
<feature type="region of interest" description="Disordered" evidence="4">
    <location>
        <begin position="2011"/>
        <end position="2036"/>
    </location>
</feature>
<feature type="region of interest" description="Disordered" evidence="4">
    <location>
        <begin position="2170"/>
        <end position="2198"/>
    </location>
</feature>
<feature type="region of interest" description="Disordered" evidence="4">
    <location>
        <begin position="2320"/>
        <end position="2343"/>
    </location>
</feature>
<feature type="region of interest" description="Disordered" evidence="4">
    <location>
        <begin position="2467"/>
        <end position="2492"/>
    </location>
</feature>
<feature type="region of interest" description="Disordered" evidence="4">
    <location>
        <begin position="2611"/>
        <end position="2644"/>
    </location>
</feature>
<feature type="region of interest" description="Disordered" evidence="4">
    <location>
        <begin position="2767"/>
        <end position="2792"/>
    </location>
</feature>
<feature type="region of interest" description="Disordered" evidence="4">
    <location>
        <begin position="2916"/>
        <end position="2948"/>
    </location>
</feature>
<feature type="region of interest" description="Disordered" evidence="4">
    <location>
        <begin position="3202"/>
        <end position="3252"/>
    </location>
</feature>
<feature type="region of interest" description="Disordered" evidence="4">
    <location>
        <begin position="3371"/>
        <end position="3412"/>
    </location>
</feature>
<feature type="region of interest" description="Disordered" evidence="4">
    <location>
        <begin position="3550"/>
        <end position="3618"/>
    </location>
</feature>
<feature type="coiled-coil region" evidence="1">
    <location>
        <begin position="3326"/>
        <end position="3376"/>
    </location>
</feature>
<feature type="coiled-coil region" evidence="1">
    <location>
        <begin position="3408"/>
        <end position="3475"/>
    </location>
</feature>
<feature type="short sequence motif" description="Integrin-like recognition motif NGR" evidence="12">
    <location>
        <begin position="214"/>
        <end position="216"/>
    </location>
</feature>
<feature type="short sequence motif" description="Integrin-like recognition motif RGT" evidence="11">
    <location>
        <begin position="416"/>
        <end position="418"/>
    </location>
</feature>
<feature type="short sequence motif" description="Integrin-like recognition motif AGD" evidence="11">
    <location>
        <begin position="485"/>
        <end position="487"/>
    </location>
</feature>
<feature type="short sequence motif" description="LPXTG sorting signal" evidence="3">
    <location>
        <begin position="3614"/>
        <end position="3618"/>
    </location>
</feature>
<feature type="compositionally biased region" description="Basic and acidic residues" evidence="4">
    <location>
        <begin position="445"/>
        <end position="454"/>
    </location>
</feature>
<feature type="compositionally biased region" description="Basic and acidic residues" evidence="4">
    <location>
        <begin position="1124"/>
        <end position="1135"/>
    </location>
</feature>
<feature type="compositionally biased region" description="Basic and acidic residues" evidence="4">
    <location>
        <begin position="1563"/>
        <end position="1573"/>
    </location>
</feature>
<feature type="compositionally biased region" description="Polar residues" evidence="4">
    <location>
        <begin position="2011"/>
        <end position="2022"/>
    </location>
</feature>
<feature type="compositionally biased region" description="Polar residues" evidence="4">
    <location>
        <begin position="2767"/>
        <end position="2778"/>
    </location>
</feature>
<feature type="compositionally biased region" description="Polar residues" evidence="4">
    <location>
        <begin position="3210"/>
        <end position="3220"/>
    </location>
</feature>
<feature type="compositionally biased region" description="Basic and acidic residues" evidence="4">
    <location>
        <begin position="3223"/>
        <end position="3237"/>
    </location>
</feature>
<feature type="compositionally biased region" description="Low complexity" evidence="4">
    <location>
        <begin position="3371"/>
        <end position="3406"/>
    </location>
</feature>
<feature type="compositionally biased region" description="Polar residues" evidence="4">
    <location>
        <begin position="3550"/>
        <end position="3560"/>
    </location>
</feature>
<feature type="compositionally biased region" description="Pro residues" evidence="4">
    <location>
        <begin position="3563"/>
        <end position="3605"/>
    </location>
</feature>
<feature type="modified residue" description="Pentaglycyl murein peptidoglycan amidated threonine" evidence="3">
    <location>
        <position position="3617"/>
    </location>
</feature>
<feature type="mutagenesis site" description="No change in binding to activated platelets. No change in platelet spreading. No binding to activated platelets; when associated with 416-A--A-418 and 486-A-A-487. Triple mutant shows no change in binding to fibronectin, vitronectin or salivary pellicle." evidence="8">
    <original>NGR</original>
    <variation>AAA</variation>
    <location>
        <begin position="214"/>
        <end position="216"/>
    </location>
</feature>
<feature type="mutagenesis site" description="Decreased ADP release by dense granules, decreased platelet spreading. No change in binding to activated platelets. No binding to activated platelets; when associated with 214-A--A-216 and 486-A-A-487. Triple mutant shows no change in binding to fibronectin, vitronectin or salivary pellicle." evidence="7 8">
    <original>RGT</original>
    <variation>AAA</variation>
    <location>
        <begin position="416"/>
        <end position="418"/>
    </location>
</feature>
<feature type="mutagenesis site" description="No change in ADP release by dense granules, decreased platelet spreading. No change in binding to activated platelets. No binding to activated platelets; when associated with 214-A--A-216 and 416-A--A-418. Triple mutant shows no change in binding to fibronectin, vitronectin or salivary pellicle." evidence="7 8">
    <original>GD</original>
    <variation>AA</variation>
    <location>
        <begin position="486"/>
        <end position="487"/>
    </location>
</feature>
<reference key="1">
    <citation type="journal article" date="2007" name="J. Bacteriol.">
        <title>Genome-wide transcriptional changes in Streptococcus gordonii in response to competence signaling peptide.</title>
        <authorList>
            <person name="Vickerman M.M."/>
            <person name="Iobst S."/>
            <person name="Jesionowski A.M."/>
            <person name="Gill S.R."/>
        </authorList>
    </citation>
    <scope>NUCLEOTIDE SEQUENCE [LARGE SCALE GENOMIC DNA]</scope>
    <source>
        <strain>Challis / ATCC 35105 / BCRC 15272 / CH1 / DL1 / V288</strain>
    </source>
</reference>
<reference key="2">
    <citation type="journal article" date="1993" name="J. Med. Microbiol.">
        <title>Identity of viridans streptococci isolated from cases of infective endocarditis.</title>
        <authorList>
            <person name="Douglas C.W."/>
            <person name="Heath J."/>
            <person name="Hampton K.K."/>
            <person name="Preston F.E."/>
        </authorList>
    </citation>
    <scope>S.GORDONII IN INFECTIVE ENDOCARDITIS</scope>
</reference>
<reference key="3">
    <citation type="journal article" date="2010" name="Infect. Immun.">
        <title>Human platelets recognize a novel surface protein, PadA, on Streptococcus gordonii through a unique interaction involving fibrinogen receptor GPIIbIIIa.</title>
        <authorList>
            <person name="Petersen H.J."/>
            <person name="Keane C."/>
            <person name="Jenkinson H.F."/>
            <person name="Vickerman M.M."/>
            <person name="Jesionowski A."/>
            <person name="Waterhouse J.C."/>
            <person name="Cox D."/>
            <person name="Kerrigan S.W."/>
        </authorList>
    </citation>
    <scope>FUNCTION</scope>
    <scope>ACTIVITY REGULATION</scope>
    <scope>SUBCELLULAR LOCATION</scope>
    <scope>DOMAIN</scope>
    <scope>DISRUPTION PHENOTYPE</scope>
    <source>
        <strain>Challis / ATCC 35105 / BCRC 15272 / CH1 / DL1 / V288</strain>
    </source>
</reference>
<reference key="4">
    <citation type="journal article" date="2010" name="Arterioscler. Thromb. Vasc. Biol.">
        <title>Mechanism of outside-in {alpha}IIb{beta}3-mediated activation of human platelets by the colonizing Bacterium, Streptococcus gordonii.</title>
        <authorList>
            <person name="Keane C."/>
            <person name="Petersen H."/>
            <person name="Reynolds K."/>
            <person name="Newman D.K."/>
            <person name="Cox D."/>
            <person name="Jenkinson H.F."/>
            <person name="Newman P.J."/>
            <person name="Kerrigan S.W."/>
        </authorList>
    </citation>
    <scope>FUNCTION</scope>
    <scope>DISRUPTION PHENOTYPE</scope>
    <source>
        <strain>Challis / ATCC 35105 / BCRC 15272 / CH1 / DL1 / V288</strain>
    </source>
</reference>
<reference key="5">
    <citation type="journal article" date="2013" name="Thromb. Haemost.">
        <title>Multiple sites on Streptococcus gordonii surface protein PadA bind to platelet GPIIbIIIa.</title>
        <authorList>
            <person name="Keane C."/>
            <person name="Petersen H.J."/>
            <person name="Tilley D."/>
            <person name="Haworth J."/>
            <person name="Cox D."/>
            <person name="Jenkinson H.F."/>
            <person name="Kerrigan S.W."/>
        </authorList>
    </citation>
    <scope>FUNCTION</scope>
    <scope>DISRUPTION PHENOTYPE</scope>
    <scope>MUTAGENESIS OF 416-ARG--THR-418 AND 486-GLY-ASP-487</scope>
    <source>
        <strain>Challis / ATCC 35105 / BCRC 15272 / CH1 / DL1 / V288</strain>
    </source>
</reference>
<reference key="6">
    <citation type="journal article" date="2017" name="Cell. Microbiol.">
        <title>Concerted functions of Streptococcus gordonii surface proteins PadA and Hsa mediate activation of human platelets and interactions with extracellular matrix.</title>
        <authorList>
            <person name="Haworth J.A."/>
            <person name="Jenkinson H.F."/>
            <person name="Petersen H.J."/>
            <person name="Back C.R."/>
            <person name="Brittan J.L."/>
            <person name="Kerrigan S.W."/>
            <person name="Nobbs A.H."/>
        </authorList>
    </citation>
    <scope>FUNCTION IN ADHESION TO HOST CELLS AND BIOFILM FORMATION</scope>
    <scope>SUBCELLULAR LOCATION</scope>
    <scope>DISRUPTION PHENOTYPE</scope>
    <scope>MUTAGENESIS OF 214-ASN--ARG-216; 416-ARG--THR-418 AND 486-GLY-ASP-487</scope>
    <source>
        <strain>Challis / ATCC 35105 / BCRC 15272 / CH1 / DL1 / V288</strain>
    </source>
</reference>
<name>PADA_STRGC</name>
<organism>
    <name type="scientific">Streptococcus gordonii (strain Challis / ATCC 35105 / BCRC 15272 / CH1 / DL1 / V288)</name>
    <dbReference type="NCBI Taxonomy" id="467705"/>
    <lineage>
        <taxon>Bacteria</taxon>
        <taxon>Bacillati</taxon>
        <taxon>Bacillota</taxon>
        <taxon>Bacilli</taxon>
        <taxon>Lactobacillales</taxon>
        <taxon>Streptococcaceae</taxon>
        <taxon>Streptococcus</taxon>
    </lineage>
</organism>
<protein>
    <recommendedName>
        <fullName evidence="10">Platelet adherence protein A</fullName>
    </recommendedName>
    <alternativeName>
        <fullName evidence="13">Adhesin PadA</fullName>
    </alternativeName>
</protein>
<keyword id="KW-0130">Cell adhesion</keyword>
<keyword id="KW-0134">Cell wall</keyword>
<keyword id="KW-0175">Coiled coil</keyword>
<keyword id="KW-0572">Peptidoglycan-anchor</keyword>
<keyword id="KW-1185">Reference proteome</keyword>
<keyword id="KW-0964">Secreted</keyword>
<keyword id="KW-0732">Signal</keyword>
<keyword id="KW-0843">Virulence</keyword>
<comment type="function">
    <text evidence="5 6 7 8">A cell wall protein involved with Hsa in host cell interactions required for colonization and pathogenesis (PubMed:19884334, PubMed:21071690, PubMed:24136582, PubMed:27616700). Involved in recognition of platelets. Interacts with human platelet integrin receptor GPIIbIIIa (a complex of ITGA2B and ITGB3) (PubMed:19884334). Involved in platelet spreading, presumably by activation of outside-in signaling leading to platelet activation and then spreading. Spreading also involves GPIIbIIIa (PubMed:21071690). Binding to platelets under static conditions causes platelet dense granules to secrete ADP (similar to release induced by fibrinogen binding), has no effect on platelet alpha granule release. The N-terminal 656 aa residue fragment (called F2) also binds platelets, causes dense granule secretion and allows platelet spreading (PubMed:24136582). Acts in concert with Hsa to promote binding to human fibronectin (FN1) and vitronectin (VTN), and biofilm formation. F2 bind activated platelets more strongly than unactivated platelets. Binding to both FN1 and VTN is mediated at least in part by their glycosylation (PubMed:27616700).</text>
</comment>
<comment type="activity regulation">
    <text evidence="5">Whole bacterial adhesion to Chinese hamster ovary cells expressing GPIIbIIIa is abrogated by integrin inhibitor RGDS and GPIIbIIIa inhibitor Abciximab.</text>
</comment>
<comment type="subcellular location">
    <subcellularLocation>
        <location evidence="3 5 8">Secreted</location>
        <location evidence="3 5 8">Cell wall</location>
        <topology evidence="3">Peptidoglycan-anchor</topology>
    </subcellularLocation>
</comment>
<comment type="domain">
    <text evidence="5 7 8 14">The central region (709-3205) contains 17 RrgB repeats and may serve as a flexible extension that holds the N-terminus away from the bacterial surface (Probable). Immobilized protein fragments 34-690 (also called F2) and 34-1328 bind to human platelets but 34-359 does not (PubMed:19884334). Three integrin-like recognition motifs (NGR, RGT and AGD) are involved together in platelet recognition, but not in fibronectin- or vitronectin-binding, nor biofilm formation (PubMed:24136582, PubMed:27616700).</text>
</comment>
<comment type="disruption phenotype">
    <text evidence="5 6 7 8">Bacteria bind less well to human platelets; no change in platelet aggregation (PubMed:19884334, PubMed:21071690). Platelets no longer spread on S.gordonii (PubMed:21071690). Platelets roll on immobilized bacteria but do not adhere under low shear or static conditions (PubMed:24136582). Single mutant binds less well to vitronectin (VTN) and fibronectin (FN1), slightly less well to salivary pellicle and makes less biofilm on salivary pellicle. Double hsa-padA deletions bind less well to human platelets than does the single padA deletion and make no biofilm on saliva-covered slides (PubMed:27616700).</text>
</comment>
<comment type="miscellaneous">
    <text evidence="9">S.gordonii, a commensal oral cavity bacteria, is among the bacteria most frequently identified as being the primary etiological agents of subacute infective endocarditis (found in 13% of cases).</text>
</comment>
<evidence type="ECO:0000255" key="1"/>
<evidence type="ECO:0000255" key="2">
    <source>
        <dbReference type="PROSITE-ProRule" id="PRU00219"/>
    </source>
</evidence>
<evidence type="ECO:0000255" key="3">
    <source>
        <dbReference type="PROSITE-ProRule" id="PRU00477"/>
    </source>
</evidence>
<evidence type="ECO:0000256" key="4">
    <source>
        <dbReference type="SAM" id="MobiDB-lite"/>
    </source>
</evidence>
<evidence type="ECO:0000269" key="5">
    <source>
    </source>
</evidence>
<evidence type="ECO:0000269" key="6">
    <source>
    </source>
</evidence>
<evidence type="ECO:0000269" key="7">
    <source>
    </source>
</evidence>
<evidence type="ECO:0000269" key="8">
    <source>
    </source>
</evidence>
<evidence type="ECO:0000269" key="9">
    <source>
    </source>
</evidence>
<evidence type="ECO:0000303" key="10">
    <source>
    </source>
</evidence>
<evidence type="ECO:0000303" key="11">
    <source>
    </source>
</evidence>
<evidence type="ECO:0000303" key="12">
    <source>
    </source>
</evidence>
<evidence type="ECO:0000305" key="13"/>
<evidence type="ECO:0000305" key="14">
    <source>
    </source>
</evidence>